<proteinExistence type="inferred from homology"/>
<accession>B8CVU8</accession>
<organism>
    <name type="scientific">Shewanella piezotolerans (strain WP3 / JCM 13877)</name>
    <dbReference type="NCBI Taxonomy" id="225849"/>
    <lineage>
        <taxon>Bacteria</taxon>
        <taxon>Pseudomonadati</taxon>
        <taxon>Pseudomonadota</taxon>
        <taxon>Gammaproteobacteria</taxon>
        <taxon>Alteromonadales</taxon>
        <taxon>Shewanellaceae</taxon>
        <taxon>Shewanella</taxon>
    </lineage>
</organism>
<comment type="function">
    <text evidence="1">F(1)F(0) ATP synthase produces ATP from ADP in the presence of a proton or sodium gradient. F-type ATPases consist of two structural domains, F(1) containing the extramembraneous catalytic core and F(0) containing the membrane proton channel, linked together by a central stalk and a peripheral stalk. During catalysis, ATP synthesis in the catalytic domain of F(1) is coupled via a rotary mechanism of the central stalk subunits to proton translocation.</text>
</comment>
<comment type="function">
    <text evidence="1">This protein is part of the stalk that links CF(0) to CF(1). It either transmits conformational changes from CF(0) to CF(1) or is implicated in proton conduction.</text>
</comment>
<comment type="subunit">
    <text evidence="1">F-type ATPases have 2 components, F(1) - the catalytic core - and F(0) - the membrane proton channel. F(1) has five subunits: alpha(3), beta(3), gamma(1), delta(1), epsilon(1). F(0) has three main subunits: a(1), b(2) and c(10-14). The alpha and beta chains form an alternating ring which encloses part of the gamma chain. F(1) is attached to F(0) by a central stalk formed by the gamma and epsilon chains, while a peripheral stalk is formed by the delta and b chains.</text>
</comment>
<comment type="subcellular location">
    <subcellularLocation>
        <location evidence="1">Cell inner membrane</location>
        <topology evidence="1">Peripheral membrane protein</topology>
    </subcellularLocation>
</comment>
<comment type="similarity">
    <text evidence="1">Belongs to the ATPase delta chain family.</text>
</comment>
<protein>
    <recommendedName>
        <fullName evidence="1">ATP synthase subunit delta</fullName>
    </recommendedName>
    <alternativeName>
        <fullName evidence="1">ATP synthase F(1) sector subunit delta</fullName>
    </alternativeName>
    <alternativeName>
        <fullName evidence="1">F-type ATPase subunit delta</fullName>
        <shortName evidence="1">F-ATPase subunit delta</shortName>
    </alternativeName>
</protein>
<keyword id="KW-0066">ATP synthesis</keyword>
<keyword id="KW-0997">Cell inner membrane</keyword>
<keyword id="KW-1003">Cell membrane</keyword>
<keyword id="KW-0139">CF(1)</keyword>
<keyword id="KW-0375">Hydrogen ion transport</keyword>
<keyword id="KW-0406">Ion transport</keyword>
<keyword id="KW-0472">Membrane</keyword>
<keyword id="KW-0813">Transport</keyword>
<dbReference type="EMBL" id="CP000472">
    <property type="protein sequence ID" value="ACJ31774.1"/>
    <property type="molecule type" value="Genomic_DNA"/>
</dbReference>
<dbReference type="RefSeq" id="WP_020915098.1">
    <property type="nucleotide sequence ID" value="NC_011566.1"/>
</dbReference>
<dbReference type="SMR" id="B8CVU8"/>
<dbReference type="STRING" id="225849.swp_5159"/>
<dbReference type="KEGG" id="swp:swp_5159"/>
<dbReference type="eggNOG" id="COG0712">
    <property type="taxonomic scope" value="Bacteria"/>
</dbReference>
<dbReference type="HOGENOM" id="CLU_085114_3_0_6"/>
<dbReference type="OrthoDB" id="9816221at2"/>
<dbReference type="Proteomes" id="UP000000753">
    <property type="component" value="Chromosome"/>
</dbReference>
<dbReference type="GO" id="GO:0005886">
    <property type="term" value="C:plasma membrane"/>
    <property type="evidence" value="ECO:0007669"/>
    <property type="project" value="UniProtKB-SubCell"/>
</dbReference>
<dbReference type="GO" id="GO:0045259">
    <property type="term" value="C:proton-transporting ATP synthase complex"/>
    <property type="evidence" value="ECO:0007669"/>
    <property type="project" value="UniProtKB-KW"/>
</dbReference>
<dbReference type="GO" id="GO:0046933">
    <property type="term" value="F:proton-transporting ATP synthase activity, rotational mechanism"/>
    <property type="evidence" value="ECO:0007669"/>
    <property type="project" value="UniProtKB-UniRule"/>
</dbReference>
<dbReference type="Gene3D" id="1.10.520.20">
    <property type="entry name" value="N-terminal domain of the delta subunit of the F1F0-ATP synthase"/>
    <property type="match status" value="1"/>
</dbReference>
<dbReference type="HAMAP" id="MF_01416">
    <property type="entry name" value="ATP_synth_delta_bact"/>
    <property type="match status" value="1"/>
</dbReference>
<dbReference type="InterPro" id="IPR026015">
    <property type="entry name" value="ATP_synth_OSCP/delta_N_sf"/>
</dbReference>
<dbReference type="InterPro" id="IPR000711">
    <property type="entry name" value="ATPase_OSCP/dsu"/>
</dbReference>
<dbReference type="NCBIfam" id="TIGR01145">
    <property type="entry name" value="ATP_synt_delta"/>
    <property type="match status" value="1"/>
</dbReference>
<dbReference type="NCBIfam" id="NF004402">
    <property type="entry name" value="PRK05758.2-2"/>
    <property type="match status" value="1"/>
</dbReference>
<dbReference type="NCBIfam" id="NF004404">
    <property type="entry name" value="PRK05758.2-5"/>
    <property type="match status" value="1"/>
</dbReference>
<dbReference type="PANTHER" id="PTHR11910">
    <property type="entry name" value="ATP SYNTHASE DELTA CHAIN"/>
    <property type="match status" value="1"/>
</dbReference>
<dbReference type="Pfam" id="PF00213">
    <property type="entry name" value="OSCP"/>
    <property type="match status" value="1"/>
</dbReference>
<dbReference type="PRINTS" id="PR00125">
    <property type="entry name" value="ATPASEDELTA"/>
</dbReference>
<dbReference type="SUPFAM" id="SSF47928">
    <property type="entry name" value="N-terminal domain of the delta subunit of the F1F0-ATP synthase"/>
    <property type="match status" value="1"/>
</dbReference>
<name>ATPD_SHEPW</name>
<evidence type="ECO:0000255" key="1">
    <source>
        <dbReference type="HAMAP-Rule" id="MF_01416"/>
    </source>
</evidence>
<gene>
    <name evidence="1" type="primary">atpH</name>
    <name type="ordered locus">swp_5159</name>
</gene>
<feature type="chain" id="PRO_0000371131" description="ATP synthase subunit delta">
    <location>
        <begin position="1"/>
        <end position="177"/>
    </location>
</feature>
<sequence>MAEITTIARPYAKAAFDFALEQNAIENWVEMLNFAALVSENETMQPLLSGSLASNQLAELFIGVCGEQINEQAQNLLKVMAENGRLVVLPAVAQLFVEMQHEYAKEVEAQVVSATELTSEQQQEMSASLEKRLARKVKLNCSIDASLIAGVIITAGDLVIDGSVRGKISRLSDTLQS</sequence>
<reference key="1">
    <citation type="journal article" date="2008" name="PLoS ONE">
        <title>Environmental adaptation: genomic analysis of the piezotolerant and psychrotolerant deep-sea iron reducing bacterium Shewanella piezotolerans WP3.</title>
        <authorList>
            <person name="Wang F."/>
            <person name="Wang J."/>
            <person name="Jian H."/>
            <person name="Zhang B."/>
            <person name="Li S."/>
            <person name="Wang F."/>
            <person name="Zeng X."/>
            <person name="Gao L."/>
            <person name="Bartlett D.H."/>
            <person name="Yu J."/>
            <person name="Hu S."/>
            <person name="Xiao X."/>
        </authorList>
    </citation>
    <scope>NUCLEOTIDE SEQUENCE [LARGE SCALE GENOMIC DNA]</scope>
    <source>
        <strain>WP3 / JCM 13877</strain>
    </source>
</reference>